<proteinExistence type="inferred from homology"/>
<sequence length="165" mass="17762">MTLSRNSHKEDQLEEKVLVVNRCCKVVKGGRKFSFSALILVGDRKGRLGFGFAKANELTDAIRKGGDAARKNLVSINSLEGGSIPHEVLVNHDGAELLLKPAKPGTGIVAGSRIRLILEMAGVKDIVAKSLGSNNPMNQVKAAFKALLTLSCKDDIMKRRAVIND</sequence>
<accession>Q3KLI5</accession>
<gene>
    <name evidence="1" type="primary">rpsE</name>
    <name type="ordered locus">CTA_0561</name>
</gene>
<protein>
    <recommendedName>
        <fullName evidence="1">Small ribosomal subunit protein uS5</fullName>
    </recommendedName>
    <alternativeName>
        <fullName evidence="2">30S ribosomal protein S5</fullName>
    </alternativeName>
</protein>
<reference key="1">
    <citation type="journal article" date="2005" name="Infect. Immun.">
        <title>Comparative genomic analysis of Chlamydia trachomatis oculotropic and genitotropic strains.</title>
        <authorList>
            <person name="Carlson J.H."/>
            <person name="Porcella S.F."/>
            <person name="McClarty G."/>
            <person name="Caldwell H.D."/>
        </authorList>
    </citation>
    <scope>NUCLEOTIDE SEQUENCE [LARGE SCALE GENOMIC DNA]</scope>
    <source>
        <strain>ATCC VR-571B / DSM 19440 / HAR-13</strain>
    </source>
</reference>
<keyword id="KW-0687">Ribonucleoprotein</keyword>
<keyword id="KW-0689">Ribosomal protein</keyword>
<keyword id="KW-0694">RNA-binding</keyword>
<keyword id="KW-0699">rRNA-binding</keyword>
<evidence type="ECO:0000255" key="1">
    <source>
        <dbReference type="HAMAP-Rule" id="MF_01307"/>
    </source>
</evidence>
<evidence type="ECO:0000305" key="2"/>
<comment type="function">
    <text evidence="1">With S4 and S12 plays an important role in translational accuracy.</text>
</comment>
<comment type="function">
    <text evidence="1">Located at the back of the 30S subunit body where it stabilizes the conformation of the head with respect to the body.</text>
</comment>
<comment type="subunit">
    <text evidence="1">Part of the 30S ribosomal subunit. Contacts proteins S4 and S8.</text>
</comment>
<comment type="domain">
    <text>The N-terminal domain interacts with the head of the 30S subunit; the C-terminal domain interacts with the body and contacts protein S4. The interaction surface between S4 and S5 is involved in control of translational fidelity.</text>
</comment>
<comment type="similarity">
    <text evidence="1">Belongs to the universal ribosomal protein uS5 family.</text>
</comment>
<feature type="chain" id="PRO_0000230338" description="Small ribosomal subunit protein uS5">
    <location>
        <begin position="1"/>
        <end position="165"/>
    </location>
</feature>
<feature type="domain" description="S5 DRBM" evidence="1">
    <location>
        <begin position="13"/>
        <end position="76"/>
    </location>
</feature>
<name>RS5_CHLTA</name>
<organism>
    <name type="scientific">Chlamydia trachomatis serovar A (strain ATCC VR-571B / DSM 19440 / HAR-13)</name>
    <dbReference type="NCBI Taxonomy" id="315277"/>
    <lineage>
        <taxon>Bacteria</taxon>
        <taxon>Pseudomonadati</taxon>
        <taxon>Chlamydiota</taxon>
        <taxon>Chlamydiia</taxon>
        <taxon>Chlamydiales</taxon>
        <taxon>Chlamydiaceae</taxon>
        <taxon>Chlamydia/Chlamydophila group</taxon>
        <taxon>Chlamydia</taxon>
    </lineage>
</organism>
<dbReference type="EMBL" id="CP000051">
    <property type="protein sequence ID" value="AAX50787.1"/>
    <property type="molecule type" value="Genomic_DNA"/>
</dbReference>
<dbReference type="RefSeq" id="WP_009871876.1">
    <property type="nucleotide sequence ID" value="NC_007429.1"/>
</dbReference>
<dbReference type="SMR" id="Q3KLI5"/>
<dbReference type="GeneID" id="1246166"/>
<dbReference type="KEGG" id="cta:CTA_0561"/>
<dbReference type="HOGENOM" id="CLU_065898_2_2_0"/>
<dbReference type="Proteomes" id="UP000002532">
    <property type="component" value="Chromosome"/>
</dbReference>
<dbReference type="GO" id="GO:0015935">
    <property type="term" value="C:small ribosomal subunit"/>
    <property type="evidence" value="ECO:0007669"/>
    <property type="project" value="InterPro"/>
</dbReference>
<dbReference type="GO" id="GO:0019843">
    <property type="term" value="F:rRNA binding"/>
    <property type="evidence" value="ECO:0007669"/>
    <property type="project" value="UniProtKB-UniRule"/>
</dbReference>
<dbReference type="GO" id="GO:0003735">
    <property type="term" value="F:structural constituent of ribosome"/>
    <property type="evidence" value="ECO:0007669"/>
    <property type="project" value="InterPro"/>
</dbReference>
<dbReference type="GO" id="GO:0006412">
    <property type="term" value="P:translation"/>
    <property type="evidence" value="ECO:0007669"/>
    <property type="project" value="UniProtKB-UniRule"/>
</dbReference>
<dbReference type="FunFam" id="3.30.160.20:FF:000066">
    <property type="entry name" value="30S ribosomal protein S5"/>
    <property type="match status" value="1"/>
</dbReference>
<dbReference type="FunFam" id="3.30.230.10:FF:000002">
    <property type="entry name" value="30S ribosomal protein S5"/>
    <property type="match status" value="1"/>
</dbReference>
<dbReference type="Gene3D" id="3.30.160.20">
    <property type="match status" value="1"/>
</dbReference>
<dbReference type="Gene3D" id="3.30.230.10">
    <property type="match status" value="1"/>
</dbReference>
<dbReference type="HAMAP" id="MF_01307_B">
    <property type="entry name" value="Ribosomal_uS5_B"/>
    <property type="match status" value="1"/>
</dbReference>
<dbReference type="InterPro" id="IPR020568">
    <property type="entry name" value="Ribosomal_Su5_D2-typ_SF"/>
</dbReference>
<dbReference type="InterPro" id="IPR000851">
    <property type="entry name" value="Ribosomal_uS5"/>
</dbReference>
<dbReference type="InterPro" id="IPR005712">
    <property type="entry name" value="Ribosomal_uS5_bac-type"/>
</dbReference>
<dbReference type="InterPro" id="IPR005324">
    <property type="entry name" value="Ribosomal_uS5_C"/>
</dbReference>
<dbReference type="InterPro" id="IPR013810">
    <property type="entry name" value="Ribosomal_uS5_N"/>
</dbReference>
<dbReference type="InterPro" id="IPR018192">
    <property type="entry name" value="Ribosomal_uS5_N_CS"/>
</dbReference>
<dbReference type="InterPro" id="IPR014721">
    <property type="entry name" value="Ribsml_uS5_D2-typ_fold_subgr"/>
</dbReference>
<dbReference type="NCBIfam" id="TIGR01021">
    <property type="entry name" value="rpsE_bact"/>
    <property type="match status" value="1"/>
</dbReference>
<dbReference type="PANTHER" id="PTHR48277">
    <property type="entry name" value="MITOCHONDRIAL RIBOSOMAL PROTEIN S5"/>
    <property type="match status" value="1"/>
</dbReference>
<dbReference type="PANTHER" id="PTHR48277:SF1">
    <property type="entry name" value="MITOCHONDRIAL RIBOSOMAL PROTEIN S5"/>
    <property type="match status" value="1"/>
</dbReference>
<dbReference type="Pfam" id="PF00333">
    <property type="entry name" value="Ribosomal_S5"/>
    <property type="match status" value="1"/>
</dbReference>
<dbReference type="Pfam" id="PF03719">
    <property type="entry name" value="Ribosomal_S5_C"/>
    <property type="match status" value="1"/>
</dbReference>
<dbReference type="SUPFAM" id="SSF54768">
    <property type="entry name" value="dsRNA-binding domain-like"/>
    <property type="match status" value="1"/>
</dbReference>
<dbReference type="SUPFAM" id="SSF54211">
    <property type="entry name" value="Ribosomal protein S5 domain 2-like"/>
    <property type="match status" value="1"/>
</dbReference>
<dbReference type="PROSITE" id="PS00585">
    <property type="entry name" value="RIBOSOMAL_S5"/>
    <property type="match status" value="1"/>
</dbReference>
<dbReference type="PROSITE" id="PS50881">
    <property type="entry name" value="S5_DSRBD"/>
    <property type="match status" value="1"/>
</dbReference>